<comment type="function">
    <text evidence="1">Catalyzes the reversible formation of acyl-phosphate (acyl-PO(4)) from acyl-[acyl-carrier-protein] (acyl-ACP). This enzyme utilizes acyl-ACP as fatty acyl donor, but not acyl-CoA.</text>
</comment>
<comment type="catalytic activity">
    <reaction evidence="1">
        <text>a fatty acyl-[ACP] + phosphate = an acyl phosphate + holo-[ACP]</text>
        <dbReference type="Rhea" id="RHEA:42292"/>
        <dbReference type="Rhea" id="RHEA-COMP:9685"/>
        <dbReference type="Rhea" id="RHEA-COMP:14125"/>
        <dbReference type="ChEBI" id="CHEBI:43474"/>
        <dbReference type="ChEBI" id="CHEBI:59918"/>
        <dbReference type="ChEBI" id="CHEBI:64479"/>
        <dbReference type="ChEBI" id="CHEBI:138651"/>
        <dbReference type="EC" id="2.3.1.274"/>
    </reaction>
</comment>
<comment type="pathway">
    <text evidence="1">Lipid metabolism; phospholipid metabolism.</text>
</comment>
<comment type="subunit">
    <text evidence="1">Homodimer. Probably interacts with PlsY.</text>
</comment>
<comment type="subcellular location">
    <subcellularLocation>
        <location evidence="1">Cytoplasm</location>
    </subcellularLocation>
    <text evidence="1">Associated with the membrane possibly through PlsY.</text>
</comment>
<comment type="similarity">
    <text evidence="1">Belongs to the PlsX family.</text>
</comment>
<feature type="chain" id="PRO_0000189835" description="Phosphate acyltransferase">
    <location>
        <begin position="1"/>
        <end position="353"/>
    </location>
</feature>
<keyword id="KW-0963">Cytoplasm</keyword>
<keyword id="KW-0444">Lipid biosynthesis</keyword>
<keyword id="KW-0443">Lipid metabolism</keyword>
<keyword id="KW-0594">Phospholipid biosynthesis</keyword>
<keyword id="KW-1208">Phospholipid metabolism</keyword>
<keyword id="KW-1185">Reference proteome</keyword>
<keyword id="KW-0808">Transferase</keyword>
<organism>
    <name type="scientific">Agrobacterium fabrum (strain C58 / ATCC 33970)</name>
    <name type="common">Agrobacterium tumefaciens (strain C58)</name>
    <dbReference type="NCBI Taxonomy" id="176299"/>
    <lineage>
        <taxon>Bacteria</taxon>
        <taxon>Pseudomonadati</taxon>
        <taxon>Pseudomonadota</taxon>
        <taxon>Alphaproteobacteria</taxon>
        <taxon>Hyphomicrobiales</taxon>
        <taxon>Rhizobiaceae</taxon>
        <taxon>Rhizobium/Agrobacterium group</taxon>
        <taxon>Agrobacterium</taxon>
        <taxon>Agrobacterium tumefaciens complex</taxon>
    </lineage>
</organism>
<name>PLSX_AGRFC</name>
<gene>
    <name evidence="1" type="primary">plsX</name>
    <name type="ordered locus">Atu1178</name>
    <name type="ORF">AGR_C_2176</name>
</gene>
<accession>Q8UG63</accession>
<sequence>MIRIAIDVMGGDFGPDVAIPGAAKALERHNDVTFLLYGQKSKCDPILAQYPALREKSVFHDCEVSVSMDEKPSQALRRGRYVSSMWRAIEAVKLGEADVAVSAGNTGALMAMAKFCLRTMARVERPAIAGIWPTLKGESIVLDVGATIGADSQQLLDFALMGGAMARALFDIDRPTVGLLNVGVEEVKGQEEVREAGRLIREADLGTIDYRGFVEGDDIGKGTVDVVVTEGFTGNIALKAAEGTARQITTLLREAISRSFFAKIGYILAKSAFDVLREKMDPRKVNGGVFLGLNGIVIKSHGGTDAIGFASAVDVGYDMVHNGLTAKIENDLKIYHARRLPPPAPEALVADEE</sequence>
<evidence type="ECO:0000255" key="1">
    <source>
        <dbReference type="HAMAP-Rule" id="MF_00019"/>
    </source>
</evidence>
<dbReference type="EC" id="2.3.1.274" evidence="1"/>
<dbReference type="EMBL" id="AE007869">
    <property type="protein sequence ID" value="AAK86982.1"/>
    <property type="molecule type" value="Genomic_DNA"/>
</dbReference>
<dbReference type="PIR" id="AH2721">
    <property type="entry name" value="AH2721"/>
</dbReference>
<dbReference type="PIR" id="E97503">
    <property type="entry name" value="E97503"/>
</dbReference>
<dbReference type="RefSeq" id="NP_354197.1">
    <property type="nucleotide sequence ID" value="NC_003062.2"/>
</dbReference>
<dbReference type="RefSeq" id="WP_006312806.1">
    <property type="nucleotide sequence ID" value="NC_003062.2"/>
</dbReference>
<dbReference type="SMR" id="Q8UG63"/>
<dbReference type="STRING" id="176299.Atu1178"/>
<dbReference type="EnsemblBacteria" id="AAK86982">
    <property type="protein sequence ID" value="AAK86982"/>
    <property type="gene ID" value="Atu1178"/>
</dbReference>
<dbReference type="GeneID" id="1133216"/>
<dbReference type="KEGG" id="atu:Atu1178"/>
<dbReference type="PATRIC" id="fig|176299.10.peg.1198"/>
<dbReference type="eggNOG" id="COG0416">
    <property type="taxonomic scope" value="Bacteria"/>
</dbReference>
<dbReference type="HOGENOM" id="CLU_039379_1_0_5"/>
<dbReference type="OrthoDB" id="9806408at2"/>
<dbReference type="PhylomeDB" id="Q8UG63"/>
<dbReference type="UniPathway" id="UPA00085"/>
<dbReference type="Proteomes" id="UP000000813">
    <property type="component" value="Chromosome circular"/>
</dbReference>
<dbReference type="GO" id="GO:0005737">
    <property type="term" value="C:cytoplasm"/>
    <property type="evidence" value="ECO:0007669"/>
    <property type="project" value="UniProtKB-SubCell"/>
</dbReference>
<dbReference type="GO" id="GO:0043811">
    <property type="term" value="F:phosphate:acyl-[acyl carrier protein] acyltransferase activity"/>
    <property type="evidence" value="ECO:0007669"/>
    <property type="project" value="UniProtKB-UniRule"/>
</dbReference>
<dbReference type="GO" id="GO:0006633">
    <property type="term" value="P:fatty acid biosynthetic process"/>
    <property type="evidence" value="ECO:0007669"/>
    <property type="project" value="UniProtKB-UniRule"/>
</dbReference>
<dbReference type="GO" id="GO:0008654">
    <property type="term" value="P:phospholipid biosynthetic process"/>
    <property type="evidence" value="ECO:0007669"/>
    <property type="project" value="UniProtKB-KW"/>
</dbReference>
<dbReference type="Gene3D" id="3.40.718.10">
    <property type="entry name" value="Isopropylmalate Dehydrogenase"/>
    <property type="match status" value="1"/>
</dbReference>
<dbReference type="HAMAP" id="MF_00019">
    <property type="entry name" value="PlsX"/>
    <property type="match status" value="1"/>
</dbReference>
<dbReference type="InterPro" id="IPR003664">
    <property type="entry name" value="FA_synthesis"/>
</dbReference>
<dbReference type="InterPro" id="IPR012281">
    <property type="entry name" value="Phospholipid_synth_PlsX-like"/>
</dbReference>
<dbReference type="NCBIfam" id="TIGR00182">
    <property type="entry name" value="plsX"/>
    <property type="match status" value="1"/>
</dbReference>
<dbReference type="PANTHER" id="PTHR30100">
    <property type="entry name" value="FATTY ACID/PHOSPHOLIPID SYNTHESIS PROTEIN PLSX"/>
    <property type="match status" value="1"/>
</dbReference>
<dbReference type="PANTHER" id="PTHR30100:SF1">
    <property type="entry name" value="PHOSPHATE ACYLTRANSFERASE"/>
    <property type="match status" value="1"/>
</dbReference>
<dbReference type="Pfam" id="PF02504">
    <property type="entry name" value="FA_synthesis"/>
    <property type="match status" value="1"/>
</dbReference>
<dbReference type="PIRSF" id="PIRSF002465">
    <property type="entry name" value="Phsphlp_syn_PlsX"/>
    <property type="match status" value="1"/>
</dbReference>
<dbReference type="SUPFAM" id="SSF53659">
    <property type="entry name" value="Isocitrate/Isopropylmalate dehydrogenase-like"/>
    <property type="match status" value="1"/>
</dbReference>
<protein>
    <recommendedName>
        <fullName evidence="1">Phosphate acyltransferase</fullName>
        <ecNumber evidence="1">2.3.1.274</ecNumber>
    </recommendedName>
    <alternativeName>
        <fullName evidence="1">Acyl-ACP phosphotransacylase</fullName>
    </alternativeName>
    <alternativeName>
        <fullName evidence="1">Acyl-[acyl-carrier-protein]--phosphate acyltransferase</fullName>
    </alternativeName>
    <alternativeName>
        <fullName evidence="1">Phosphate-acyl-ACP acyltransferase</fullName>
    </alternativeName>
</protein>
<proteinExistence type="inferred from homology"/>
<reference key="1">
    <citation type="journal article" date="2001" name="Science">
        <title>The genome of the natural genetic engineer Agrobacterium tumefaciens C58.</title>
        <authorList>
            <person name="Wood D.W."/>
            <person name="Setubal J.C."/>
            <person name="Kaul R."/>
            <person name="Monks D.E."/>
            <person name="Kitajima J.P."/>
            <person name="Okura V.K."/>
            <person name="Zhou Y."/>
            <person name="Chen L."/>
            <person name="Wood G.E."/>
            <person name="Almeida N.F. Jr."/>
            <person name="Woo L."/>
            <person name="Chen Y."/>
            <person name="Paulsen I.T."/>
            <person name="Eisen J.A."/>
            <person name="Karp P.D."/>
            <person name="Bovee D. Sr."/>
            <person name="Chapman P."/>
            <person name="Clendenning J."/>
            <person name="Deatherage G."/>
            <person name="Gillet W."/>
            <person name="Grant C."/>
            <person name="Kutyavin T."/>
            <person name="Levy R."/>
            <person name="Li M.-J."/>
            <person name="McClelland E."/>
            <person name="Palmieri A."/>
            <person name="Raymond C."/>
            <person name="Rouse G."/>
            <person name="Saenphimmachak C."/>
            <person name="Wu Z."/>
            <person name="Romero P."/>
            <person name="Gordon D."/>
            <person name="Zhang S."/>
            <person name="Yoo H."/>
            <person name="Tao Y."/>
            <person name="Biddle P."/>
            <person name="Jung M."/>
            <person name="Krespan W."/>
            <person name="Perry M."/>
            <person name="Gordon-Kamm B."/>
            <person name="Liao L."/>
            <person name="Kim S."/>
            <person name="Hendrick C."/>
            <person name="Zhao Z.-Y."/>
            <person name="Dolan M."/>
            <person name="Chumley F."/>
            <person name="Tingey S.V."/>
            <person name="Tomb J.-F."/>
            <person name="Gordon M.P."/>
            <person name="Olson M.V."/>
            <person name="Nester E.W."/>
        </authorList>
    </citation>
    <scope>NUCLEOTIDE SEQUENCE [LARGE SCALE GENOMIC DNA]</scope>
    <source>
        <strain>C58 / ATCC 33970</strain>
    </source>
</reference>
<reference key="2">
    <citation type="journal article" date="2001" name="Science">
        <title>Genome sequence of the plant pathogen and biotechnology agent Agrobacterium tumefaciens C58.</title>
        <authorList>
            <person name="Goodner B."/>
            <person name="Hinkle G."/>
            <person name="Gattung S."/>
            <person name="Miller N."/>
            <person name="Blanchard M."/>
            <person name="Qurollo B."/>
            <person name="Goldman B.S."/>
            <person name="Cao Y."/>
            <person name="Askenazi M."/>
            <person name="Halling C."/>
            <person name="Mullin L."/>
            <person name="Houmiel K."/>
            <person name="Gordon J."/>
            <person name="Vaudin M."/>
            <person name="Iartchouk O."/>
            <person name="Epp A."/>
            <person name="Liu F."/>
            <person name="Wollam C."/>
            <person name="Allinger M."/>
            <person name="Doughty D."/>
            <person name="Scott C."/>
            <person name="Lappas C."/>
            <person name="Markelz B."/>
            <person name="Flanagan C."/>
            <person name="Crowell C."/>
            <person name="Gurson J."/>
            <person name="Lomo C."/>
            <person name="Sear C."/>
            <person name="Strub G."/>
            <person name="Cielo C."/>
            <person name="Slater S."/>
        </authorList>
    </citation>
    <scope>NUCLEOTIDE SEQUENCE [LARGE SCALE GENOMIC DNA]</scope>
    <source>
        <strain>C58 / ATCC 33970</strain>
    </source>
</reference>